<feature type="signal peptide" evidence="2">
    <location>
        <begin position="1"/>
        <end position="21"/>
    </location>
</feature>
<feature type="chain" id="PRO_0000016847" description="Cell wall synthesis protein KRE9">
    <location>
        <begin position="22"/>
        <end position="271"/>
    </location>
</feature>
<evidence type="ECO:0000250" key="1"/>
<evidence type="ECO:0000255" key="2"/>
<evidence type="ECO:0000305" key="3"/>
<comment type="function">
    <text>Involved in cell wall beta(1-&gt;6) glucan synthesis.</text>
</comment>
<comment type="subcellular location">
    <subcellularLocation>
        <location evidence="3">Secreted</location>
        <location evidence="3">Cell wall</location>
    </subcellularLocation>
</comment>
<comment type="PTM">
    <text evidence="1">O-glycosylated.</text>
</comment>
<comment type="similarity">
    <text evidence="3">Belongs to the KRE9/KNH1 family.</text>
</comment>
<keyword id="KW-0134">Cell wall</keyword>
<keyword id="KW-0961">Cell wall biogenesis/degradation</keyword>
<keyword id="KW-0325">Glycoprotein</keyword>
<keyword id="KW-0964">Secreted</keyword>
<keyword id="KW-0732">Signal</keyword>
<accession>O74226</accession>
<dbReference type="EMBL" id="AF069763">
    <property type="protein sequence ID" value="AAC32351.1"/>
    <property type="molecule type" value="Genomic_DNA"/>
</dbReference>
<dbReference type="VEuPathDB" id="FungiDB:C3_04180W_A"/>
<dbReference type="VEuPathDB" id="FungiDB:CAWG_02732"/>
<dbReference type="GO" id="GO:0005576">
    <property type="term" value="C:extracellular region"/>
    <property type="evidence" value="ECO:0007669"/>
    <property type="project" value="UniProtKB-KW"/>
</dbReference>
<dbReference type="GO" id="GO:0006078">
    <property type="term" value="P:(1-&gt;6)-beta-D-glucan biosynthetic process"/>
    <property type="evidence" value="ECO:0007669"/>
    <property type="project" value="InterPro"/>
</dbReference>
<dbReference type="GO" id="GO:0042546">
    <property type="term" value="P:cell wall biogenesis"/>
    <property type="evidence" value="ECO:0007669"/>
    <property type="project" value="InterPro"/>
</dbReference>
<dbReference type="GO" id="GO:0031505">
    <property type="term" value="P:fungal-type cell wall organization"/>
    <property type="evidence" value="ECO:0007669"/>
    <property type="project" value="TreeGrafter"/>
</dbReference>
<dbReference type="InterPro" id="IPR045328">
    <property type="entry name" value="Kre9/Knh1"/>
</dbReference>
<dbReference type="InterPro" id="IPR018466">
    <property type="entry name" value="Kre9/Knh1-like_N"/>
</dbReference>
<dbReference type="InterPro" id="IPR008659">
    <property type="entry name" value="Kre9/Knh1_C"/>
</dbReference>
<dbReference type="PANTHER" id="PTHR28154">
    <property type="entry name" value="CELL WALL SYNTHESIS PROTEIN KNH1-RELATED"/>
    <property type="match status" value="1"/>
</dbReference>
<dbReference type="PANTHER" id="PTHR28154:SF1">
    <property type="entry name" value="CELL WALL SYNTHESIS PROTEIN KNH1-RELATED"/>
    <property type="match status" value="1"/>
</dbReference>
<dbReference type="Pfam" id="PF10342">
    <property type="entry name" value="Kre9_KNH"/>
    <property type="match status" value="1"/>
</dbReference>
<dbReference type="Pfam" id="PF05390">
    <property type="entry name" value="Kre9_KNH1_C"/>
    <property type="match status" value="1"/>
</dbReference>
<reference key="1">
    <citation type="journal article" date="1998" name="Proc. Natl. Acad. Sci. U.S.A.">
        <title>The Candida albicans KRE9 gene is required for cell wall beta-1,6-glucan synthesis and is essential for growth on glucose.</title>
        <authorList>
            <person name="Lussier M."/>
            <person name="Sdicu A.-M."/>
            <person name="Shahinian S."/>
            <person name="Bussey H."/>
        </authorList>
    </citation>
    <scope>NUCLEOTIDE SEQUENCE [GENOMIC DNA]</scope>
</reference>
<proteinExistence type="inferred from homology"/>
<name>KRE9_CANAX</name>
<organism>
    <name type="scientific">Candida albicans</name>
    <name type="common">Yeast</name>
    <dbReference type="NCBI Taxonomy" id="5476"/>
    <lineage>
        <taxon>Eukaryota</taxon>
        <taxon>Fungi</taxon>
        <taxon>Dikarya</taxon>
        <taxon>Ascomycota</taxon>
        <taxon>Saccharomycotina</taxon>
        <taxon>Pichiomycetes</taxon>
        <taxon>Debaryomycetaceae</taxon>
        <taxon>Candida/Lodderomyces clade</taxon>
        <taxon>Candida</taxon>
    </lineage>
</organism>
<sequence length="271" mass="29126">MRQFQIILISLVVSIIRCVVADVDITSPKSGETFSGSSGSASIKITWDDSDDSDSPKSLDNAKGYTISLCTGPTSDGDIQCLDPLVKNEAIAGKSKTVSIPQNSVPNGYYYFQIYVTFTNGGTTIHYSPRFKLTGMSGPTATLDVTETGSVPADQASGFDTATTADSKSFTVPYTLQTGKTRYAPMQMQPGTKVTATTWSMKFPTSAVTYYSTKAGTPNVASTITPGWSYTAESAVNYASVAPYPTYWYPASERVSKATISAATKRRRWLD</sequence>
<protein>
    <recommendedName>
        <fullName>Cell wall synthesis protein KRE9</fullName>
    </recommendedName>
</protein>
<gene>
    <name type="primary">KRE9</name>
</gene>